<gene>
    <name evidence="1" type="primary">rplX</name>
    <name type="ordered locus">SPN23F02100</name>
</gene>
<proteinExistence type="inferred from homology"/>
<protein>
    <recommendedName>
        <fullName evidence="1">Large ribosomal subunit protein uL24</fullName>
    </recommendedName>
    <alternativeName>
        <fullName evidence="2">50S ribosomal protein L24</fullName>
    </alternativeName>
</protein>
<comment type="function">
    <text evidence="1">One of two assembly initiator proteins, it binds directly to the 5'-end of the 23S rRNA, where it nucleates assembly of the 50S subunit.</text>
</comment>
<comment type="function">
    <text evidence="1">One of the proteins that surrounds the polypeptide exit tunnel on the outside of the subunit.</text>
</comment>
<comment type="subunit">
    <text evidence="1">Part of the 50S ribosomal subunit.</text>
</comment>
<comment type="similarity">
    <text evidence="1">Belongs to the universal ribosomal protein uL24 family.</text>
</comment>
<sequence>MFVKKGDKVRVIAGKDKGTEAVVLTALPKVNKVIVEGVNIVKKHQRPTNELPQGGIIEKEAAIHVSNVQVLDKNGVAGRVGYKFVDGKKVRYNKKSGEVLD</sequence>
<reference key="1">
    <citation type="journal article" date="2009" name="J. Bacteriol.">
        <title>Role of conjugative elements in the evolution of the multidrug-resistant pandemic clone Streptococcus pneumoniae Spain23F ST81.</title>
        <authorList>
            <person name="Croucher N.J."/>
            <person name="Walker D."/>
            <person name="Romero P."/>
            <person name="Lennard N."/>
            <person name="Paterson G.K."/>
            <person name="Bason N.C."/>
            <person name="Mitchell A.M."/>
            <person name="Quail M.A."/>
            <person name="Andrew P.W."/>
            <person name="Parkhill J."/>
            <person name="Bentley S.D."/>
            <person name="Mitchell T.J."/>
        </authorList>
    </citation>
    <scope>NUCLEOTIDE SEQUENCE [LARGE SCALE GENOMIC DNA]</scope>
    <source>
        <strain>ATCC 700669 / Spain 23F-1</strain>
    </source>
</reference>
<accession>B8ZKG8</accession>
<dbReference type="EMBL" id="FM211187">
    <property type="protein sequence ID" value="CAR68070.1"/>
    <property type="molecule type" value="Genomic_DNA"/>
</dbReference>
<dbReference type="RefSeq" id="WP_000497691.1">
    <property type="nucleotide sequence ID" value="NC_011900.1"/>
</dbReference>
<dbReference type="SMR" id="B8ZKG8"/>
<dbReference type="GeneID" id="93738968"/>
<dbReference type="KEGG" id="sne:SPN23F02100"/>
<dbReference type="HOGENOM" id="CLU_093315_2_0_9"/>
<dbReference type="GO" id="GO:1990904">
    <property type="term" value="C:ribonucleoprotein complex"/>
    <property type="evidence" value="ECO:0007669"/>
    <property type="project" value="UniProtKB-KW"/>
</dbReference>
<dbReference type="GO" id="GO:0005840">
    <property type="term" value="C:ribosome"/>
    <property type="evidence" value="ECO:0007669"/>
    <property type="project" value="UniProtKB-KW"/>
</dbReference>
<dbReference type="GO" id="GO:0019843">
    <property type="term" value="F:rRNA binding"/>
    <property type="evidence" value="ECO:0007669"/>
    <property type="project" value="UniProtKB-UniRule"/>
</dbReference>
<dbReference type="GO" id="GO:0003735">
    <property type="term" value="F:structural constituent of ribosome"/>
    <property type="evidence" value="ECO:0007669"/>
    <property type="project" value="InterPro"/>
</dbReference>
<dbReference type="GO" id="GO:0006412">
    <property type="term" value="P:translation"/>
    <property type="evidence" value="ECO:0007669"/>
    <property type="project" value="UniProtKB-UniRule"/>
</dbReference>
<dbReference type="CDD" id="cd06089">
    <property type="entry name" value="KOW_RPL26"/>
    <property type="match status" value="1"/>
</dbReference>
<dbReference type="FunFam" id="2.30.30.30:FF:000004">
    <property type="entry name" value="50S ribosomal protein L24"/>
    <property type="match status" value="1"/>
</dbReference>
<dbReference type="Gene3D" id="2.30.30.30">
    <property type="match status" value="1"/>
</dbReference>
<dbReference type="HAMAP" id="MF_01326_B">
    <property type="entry name" value="Ribosomal_uL24_B"/>
    <property type="match status" value="1"/>
</dbReference>
<dbReference type="InterPro" id="IPR005824">
    <property type="entry name" value="KOW"/>
</dbReference>
<dbReference type="InterPro" id="IPR014722">
    <property type="entry name" value="Rib_uL2_dom2"/>
</dbReference>
<dbReference type="InterPro" id="IPR003256">
    <property type="entry name" value="Ribosomal_uL24"/>
</dbReference>
<dbReference type="InterPro" id="IPR005825">
    <property type="entry name" value="Ribosomal_uL24_CS"/>
</dbReference>
<dbReference type="InterPro" id="IPR041988">
    <property type="entry name" value="Ribosomal_uL24_KOW"/>
</dbReference>
<dbReference type="InterPro" id="IPR008991">
    <property type="entry name" value="Translation_prot_SH3-like_sf"/>
</dbReference>
<dbReference type="NCBIfam" id="TIGR01079">
    <property type="entry name" value="rplX_bact"/>
    <property type="match status" value="1"/>
</dbReference>
<dbReference type="PANTHER" id="PTHR12903">
    <property type="entry name" value="MITOCHONDRIAL RIBOSOMAL PROTEIN L24"/>
    <property type="match status" value="1"/>
</dbReference>
<dbReference type="Pfam" id="PF00467">
    <property type="entry name" value="KOW"/>
    <property type="match status" value="1"/>
</dbReference>
<dbReference type="Pfam" id="PF17136">
    <property type="entry name" value="ribosomal_L24"/>
    <property type="match status" value="1"/>
</dbReference>
<dbReference type="SMART" id="SM00739">
    <property type="entry name" value="KOW"/>
    <property type="match status" value="1"/>
</dbReference>
<dbReference type="SUPFAM" id="SSF50104">
    <property type="entry name" value="Translation proteins SH3-like domain"/>
    <property type="match status" value="1"/>
</dbReference>
<dbReference type="PROSITE" id="PS01108">
    <property type="entry name" value="RIBOSOMAL_L24"/>
    <property type="match status" value="1"/>
</dbReference>
<keyword id="KW-0687">Ribonucleoprotein</keyword>
<keyword id="KW-0689">Ribosomal protein</keyword>
<keyword id="KW-0694">RNA-binding</keyword>
<keyword id="KW-0699">rRNA-binding</keyword>
<evidence type="ECO:0000255" key="1">
    <source>
        <dbReference type="HAMAP-Rule" id="MF_01326"/>
    </source>
</evidence>
<evidence type="ECO:0000305" key="2"/>
<feature type="chain" id="PRO_1000165966" description="Large ribosomal subunit protein uL24">
    <location>
        <begin position="1"/>
        <end position="101"/>
    </location>
</feature>
<name>RL24_STRPJ</name>
<organism>
    <name type="scientific">Streptococcus pneumoniae (strain ATCC 700669 / Spain 23F-1)</name>
    <dbReference type="NCBI Taxonomy" id="561276"/>
    <lineage>
        <taxon>Bacteria</taxon>
        <taxon>Bacillati</taxon>
        <taxon>Bacillota</taxon>
        <taxon>Bacilli</taxon>
        <taxon>Lactobacillales</taxon>
        <taxon>Streptococcaceae</taxon>
        <taxon>Streptococcus</taxon>
    </lineage>
</organism>